<dbReference type="EMBL" id="AP009369">
    <property type="protein sequence ID" value="BAF50034.1"/>
    <property type="molecule type" value="Genomic_DNA"/>
</dbReference>
<dbReference type="RefSeq" id="YP_001123210.1">
    <property type="nucleotide sequence ID" value="NC_009268.1"/>
</dbReference>
<dbReference type="GeneID" id="4962578"/>
<dbReference type="GO" id="GO:0009535">
    <property type="term" value="C:chloroplast thylakoid membrane"/>
    <property type="evidence" value="ECO:0007669"/>
    <property type="project" value="UniProtKB-SubCell"/>
</dbReference>
<dbReference type="GO" id="GO:0009522">
    <property type="term" value="C:photosystem I"/>
    <property type="evidence" value="ECO:0007669"/>
    <property type="project" value="InterPro"/>
</dbReference>
<dbReference type="GO" id="GO:0015979">
    <property type="term" value="P:photosynthesis"/>
    <property type="evidence" value="ECO:0007669"/>
    <property type="project" value="UniProtKB-UniRule"/>
</dbReference>
<dbReference type="HAMAP" id="MF_00437">
    <property type="entry name" value="Ycf4"/>
    <property type="match status" value="1"/>
</dbReference>
<dbReference type="InterPro" id="IPR003359">
    <property type="entry name" value="PSI_Ycf4_assembly"/>
</dbReference>
<dbReference type="PANTHER" id="PTHR33288">
    <property type="match status" value="1"/>
</dbReference>
<dbReference type="PANTHER" id="PTHR33288:SF4">
    <property type="entry name" value="PHOTOSYSTEM I ASSEMBLY PROTEIN YCF4"/>
    <property type="match status" value="1"/>
</dbReference>
<dbReference type="Pfam" id="PF02392">
    <property type="entry name" value="Ycf4"/>
    <property type="match status" value="1"/>
</dbReference>
<accession>A4QK29</accession>
<organism>
    <name type="scientific">Arabis hirsuta</name>
    <name type="common">Hairy rock-cress</name>
    <name type="synonym">Turritis hirsuta</name>
    <dbReference type="NCBI Taxonomy" id="78191"/>
    <lineage>
        <taxon>Eukaryota</taxon>
        <taxon>Viridiplantae</taxon>
        <taxon>Streptophyta</taxon>
        <taxon>Embryophyta</taxon>
        <taxon>Tracheophyta</taxon>
        <taxon>Spermatophyta</taxon>
        <taxon>Magnoliopsida</taxon>
        <taxon>eudicotyledons</taxon>
        <taxon>Gunneridae</taxon>
        <taxon>Pentapetalae</taxon>
        <taxon>rosids</taxon>
        <taxon>malvids</taxon>
        <taxon>Brassicales</taxon>
        <taxon>Brassicaceae</taxon>
        <taxon>Arabideae</taxon>
        <taxon>Arabis</taxon>
    </lineage>
</organism>
<evidence type="ECO:0000255" key="1">
    <source>
        <dbReference type="HAMAP-Rule" id="MF_00437"/>
    </source>
</evidence>
<name>YCF4_ARAHI</name>
<protein>
    <recommendedName>
        <fullName evidence="1">Photosystem I assembly protein Ycf4</fullName>
    </recommendedName>
</protein>
<reference key="1">
    <citation type="submission" date="2007-03" db="EMBL/GenBank/DDBJ databases">
        <title>Sequencing analysis of Arabis hirsuta chloroplast DNA.</title>
        <authorList>
            <person name="Hosouchi T."/>
            <person name="Tsuruoka H."/>
            <person name="Kotani H."/>
        </authorList>
    </citation>
    <scope>NUCLEOTIDE SEQUENCE [LARGE SCALE GENOMIC DNA]</scope>
</reference>
<geneLocation type="chloroplast"/>
<feature type="chain" id="PRO_0000325995" description="Photosystem I assembly protein Ycf4">
    <location>
        <begin position="1"/>
        <end position="184"/>
    </location>
</feature>
<feature type="transmembrane region" description="Helical" evidence="1">
    <location>
        <begin position="22"/>
        <end position="42"/>
    </location>
</feature>
<feature type="transmembrane region" description="Helical" evidence="1">
    <location>
        <begin position="57"/>
        <end position="77"/>
    </location>
</feature>
<comment type="function">
    <text evidence="1">Seems to be required for the assembly of the photosystem I complex.</text>
</comment>
<comment type="subcellular location">
    <subcellularLocation>
        <location evidence="1">Plastid</location>
        <location evidence="1">Chloroplast thylakoid membrane</location>
        <topology evidence="1">Multi-pass membrane protein</topology>
    </subcellularLocation>
</comment>
<comment type="similarity">
    <text evidence="1">Belongs to the Ycf4 family.</text>
</comment>
<sequence>MSWRSESIWIEFITGSRKTSNFCWAFILFLGSLGFLLVGTSSYLGRNFISVFASQQIIFFPQGIVMSFYGIAGLFISCYLWCTFLWNVGSGYDLFDRKEGIVRIFRWGFPGKSRRIFLRFLMKDIQSIRIEVKEGVSARRVLYMEIRGQGAIPLIRTDENFTTREIEQKAAELAYFLRVPIEVF</sequence>
<gene>
    <name evidence="1" type="primary">ycf4</name>
</gene>
<proteinExistence type="inferred from homology"/>
<keyword id="KW-0150">Chloroplast</keyword>
<keyword id="KW-0472">Membrane</keyword>
<keyword id="KW-0602">Photosynthesis</keyword>
<keyword id="KW-0934">Plastid</keyword>
<keyword id="KW-0793">Thylakoid</keyword>
<keyword id="KW-0812">Transmembrane</keyword>
<keyword id="KW-1133">Transmembrane helix</keyword>